<comment type="function">
    <text evidence="1">Binds together with bS18 to 16S ribosomal RNA.</text>
</comment>
<comment type="similarity">
    <text evidence="1">Belongs to the bacterial ribosomal protein bS6 family.</text>
</comment>
<organism>
    <name type="scientific">Streptococcus equi subsp. equi (strain 4047)</name>
    <dbReference type="NCBI Taxonomy" id="553482"/>
    <lineage>
        <taxon>Bacteria</taxon>
        <taxon>Bacillati</taxon>
        <taxon>Bacillota</taxon>
        <taxon>Bacilli</taxon>
        <taxon>Lactobacillales</taxon>
        <taxon>Streptococcaceae</taxon>
        <taxon>Streptococcus</taxon>
    </lineage>
</organism>
<proteinExistence type="inferred from homology"/>
<name>RS6_STRE4</name>
<sequence length="96" mass="11124">MAKYEILYIIRPNIEEEAKNALVARFDSILTDNGATIVESKDWEKRRLAYEINDFREGLYHIVNLEATDAVALNEFDRLSKINGDILRHMIVKLDA</sequence>
<gene>
    <name evidence="1" type="primary">rpsF</name>
    <name type="ordered locus">SEQ_0408</name>
</gene>
<keyword id="KW-0687">Ribonucleoprotein</keyword>
<keyword id="KW-0689">Ribosomal protein</keyword>
<keyword id="KW-0694">RNA-binding</keyword>
<keyword id="KW-0699">rRNA-binding</keyword>
<accession>C0MB79</accession>
<protein>
    <recommendedName>
        <fullName evidence="1">Small ribosomal subunit protein bS6</fullName>
    </recommendedName>
    <alternativeName>
        <fullName evidence="2">30S ribosomal protein S6</fullName>
    </alternativeName>
</protein>
<feature type="chain" id="PRO_1000133545" description="Small ribosomal subunit protein bS6">
    <location>
        <begin position="1"/>
        <end position="96"/>
    </location>
</feature>
<evidence type="ECO:0000255" key="1">
    <source>
        <dbReference type="HAMAP-Rule" id="MF_00360"/>
    </source>
</evidence>
<evidence type="ECO:0000305" key="2"/>
<dbReference type="EMBL" id="FM204883">
    <property type="protein sequence ID" value="CAW92564.1"/>
    <property type="molecule type" value="Genomic_DNA"/>
</dbReference>
<dbReference type="RefSeq" id="WP_012678504.1">
    <property type="nucleotide sequence ID" value="NC_012471.1"/>
</dbReference>
<dbReference type="SMR" id="C0MB79"/>
<dbReference type="GeneID" id="83704228"/>
<dbReference type="KEGG" id="seu:SEQ_0408"/>
<dbReference type="HOGENOM" id="CLU_113441_5_3_9"/>
<dbReference type="OrthoDB" id="9812702at2"/>
<dbReference type="Proteomes" id="UP000001365">
    <property type="component" value="Chromosome"/>
</dbReference>
<dbReference type="GO" id="GO:0005737">
    <property type="term" value="C:cytoplasm"/>
    <property type="evidence" value="ECO:0007669"/>
    <property type="project" value="UniProtKB-ARBA"/>
</dbReference>
<dbReference type="GO" id="GO:1990904">
    <property type="term" value="C:ribonucleoprotein complex"/>
    <property type="evidence" value="ECO:0007669"/>
    <property type="project" value="UniProtKB-KW"/>
</dbReference>
<dbReference type="GO" id="GO:0005840">
    <property type="term" value="C:ribosome"/>
    <property type="evidence" value="ECO:0007669"/>
    <property type="project" value="UniProtKB-KW"/>
</dbReference>
<dbReference type="GO" id="GO:0070181">
    <property type="term" value="F:small ribosomal subunit rRNA binding"/>
    <property type="evidence" value="ECO:0007669"/>
    <property type="project" value="TreeGrafter"/>
</dbReference>
<dbReference type="GO" id="GO:0003735">
    <property type="term" value="F:structural constituent of ribosome"/>
    <property type="evidence" value="ECO:0007669"/>
    <property type="project" value="InterPro"/>
</dbReference>
<dbReference type="GO" id="GO:0006412">
    <property type="term" value="P:translation"/>
    <property type="evidence" value="ECO:0007669"/>
    <property type="project" value="UniProtKB-UniRule"/>
</dbReference>
<dbReference type="CDD" id="cd00473">
    <property type="entry name" value="bS6"/>
    <property type="match status" value="1"/>
</dbReference>
<dbReference type="FunFam" id="3.30.70.60:FF:000002">
    <property type="entry name" value="30S ribosomal protein S6"/>
    <property type="match status" value="1"/>
</dbReference>
<dbReference type="Gene3D" id="3.30.70.60">
    <property type="match status" value="1"/>
</dbReference>
<dbReference type="HAMAP" id="MF_00360">
    <property type="entry name" value="Ribosomal_bS6"/>
    <property type="match status" value="1"/>
</dbReference>
<dbReference type="InterPro" id="IPR000529">
    <property type="entry name" value="Ribosomal_bS6"/>
</dbReference>
<dbReference type="InterPro" id="IPR035980">
    <property type="entry name" value="Ribosomal_bS6_sf"/>
</dbReference>
<dbReference type="InterPro" id="IPR020814">
    <property type="entry name" value="Ribosomal_S6_plastid/chlpt"/>
</dbReference>
<dbReference type="InterPro" id="IPR014717">
    <property type="entry name" value="Transl_elong_EF1B/ribsomal_bS6"/>
</dbReference>
<dbReference type="NCBIfam" id="TIGR00166">
    <property type="entry name" value="S6"/>
    <property type="match status" value="1"/>
</dbReference>
<dbReference type="PANTHER" id="PTHR21011">
    <property type="entry name" value="MITOCHONDRIAL 28S RIBOSOMAL PROTEIN S6"/>
    <property type="match status" value="1"/>
</dbReference>
<dbReference type="PANTHER" id="PTHR21011:SF1">
    <property type="entry name" value="SMALL RIBOSOMAL SUBUNIT PROTEIN BS6M"/>
    <property type="match status" value="1"/>
</dbReference>
<dbReference type="Pfam" id="PF01250">
    <property type="entry name" value="Ribosomal_S6"/>
    <property type="match status" value="1"/>
</dbReference>
<dbReference type="SUPFAM" id="SSF54995">
    <property type="entry name" value="Ribosomal protein S6"/>
    <property type="match status" value="1"/>
</dbReference>
<reference key="1">
    <citation type="journal article" date="2009" name="PLoS Pathog.">
        <title>Genomic evidence for the evolution of Streptococcus equi: host restriction, increased virulence, and genetic exchange with human pathogens.</title>
        <authorList>
            <person name="Holden M.T.G."/>
            <person name="Heather Z."/>
            <person name="Paillot R."/>
            <person name="Steward K.F."/>
            <person name="Webb K."/>
            <person name="Ainslie F."/>
            <person name="Jourdan T."/>
            <person name="Bason N.C."/>
            <person name="Holroyd N.E."/>
            <person name="Mungall K."/>
            <person name="Quail M.A."/>
            <person name="Sanders M."/>
            <person name="Simmonds M."/>
            <person name="Willey D."/>
            <person name="Brooks K."/>
            <person name="Aanensen D.M."/>
            <person name="Spratt B.G."/>
            <person name="Jolley K.A."/>
            <person name="Maiden M.C.J."/>
            <person name="Kehoe M."/>
            <person name="Chanter N."/>
            <person name="Bentley S.D."/>
            <person name="Robinson C."/>
            <person name="Maskell D.J."/>
            <person name="Parkhill J."/>
            <person name="Waller A.S."/>
        </authorList>
    </citation>
    <scope>NUCLEOTIDE SEQUENCE [LARGE SCALE GENOMIC DNA]</scope>
    <source>
        <strain>4047</strain>
    </source>
</reference>